<keyword id="KW-0997">Cell inner membrane</keyword>
<keyword id="KW-1003">Cell membrane</keyword>
<keyword id="KW-0407">Ion channel</keyword>
<keyword id="KW-0406">Ion transport</keyword>
<keyword id="KW-0472">Membrane</keyword>
<keyword id="KW-0479">Metal-binding</keyword>
<keyword id="KW-0915">Sodium</keyword>
<keyword id="KW-0812">Transmembrane</keyword>
<keyword id="KW-1133">Transmembrane helix</keyword>
<keyword id="KW-0813">Transport</keyword>
<protein>
    <recommendedName>
        <fullName evidence="1">Fluoride-specific ion channel FluC 1</fullName>
    </recommendedName>
</protein>
<reference key="1">
    <citation type="journal article" date="2004" name="Proc. Natl. Acad. Sci. U.S.A.">
        <title>Insights into the evolution of Yersinia pestis through whole-genome comparison with Yersinia pseudotuberculosis.</title>
        <authorList>
            <person name="Chain P.S.G."/>
            <person name="Carniel E."/>
            <person name="Larimer F.W."/>
            <person name="Lamerdin J."/>
            <person name="Stoutland P.O."/>
            <person name="Regala W.M."/>
            <person name="Georgescu A.M."/>
            <person name="Vergez L.M."/>
            <person name="Land M.L."/>
            <person name="Motin V.L."/>
            <person name="Brubaker R.R."/>
            <person name="Fowler J."/>
            <person name="Hinnebusch J."/>
            <person name="Marceau M."/>
            <person name="Medigue C."/>
            <person name="Simonet M."/>
            <person name="Chenal-Francisque V."/>
            <person name="Souza B."/>
            <person name="Dacheux D."/>
            <person name="Elliott J.M."/>
            <person name="Derbise A."/>
            <person name="Hauser L.J."/>
            <person name="Garcia E."/>
        </authorList>
    </citation>
    <scope>NUCLEOTIDE SEQUENCE [LARGE SCALE GENOMIC DNA]</scope>
    <source>
        <strain>IP32953</strain>
    </source>
</reference>
<organism>
    <name type="scientific">Yersinia pseudotuberculosis serotype I (strain IP32953)</name>
    <dbReference type="NCBI Taxonomy" id="273123"/>
    <lineage>
        <taxon>Bacteria</taxon>
        <taxon>Pseudomonadati</taxon>
        <taxon>Pseudomonadota</taxon>
        <taxon>Gammaproteobacteria</taxon>
        <taxon>Enterobacterales</taxon>
        <taxon>Yersiniaceae</taxon>
        <taxon>Yersinia</taxon>
    </lineage>
</organism>
<comment type="function">
    <text evidence="1">Fluoride-specific ion channel. Important for reducing fluoride concentration in the cell, thus reducing its toxicity.</text>
</comment>
<comment type="catalytic activity">
    <reaction evidence="1">
        <text>fluoride(in) = fluoride(out)</text>
        <dbReference type="Rhea" id="RHEA:76159"/>
        <dbReference type="ChEBI" id="CHEBI:17051"/>
    </reaction>
    <physiologicalReaction direction="left-to-right" evidence="1">
        <dbReference type="Rhea" id="RHEA:76160"/>
    </physiologicalReaction>
</comment>
<comment type="activity regulation">
    <text evidence="1">Na(+) is not transported, but it plays an essential structural role and its presence is essential for fluoride channel function.</text>
</comment>
<comment type="subcellular location">
    <subcellularLocation>
        <location evidence="1">Cell inner membrane</location>
        <topology evidence="1">Multi-pass membrane protein</topology>
    </subcellularLocation>
</comment>
<comment type="similarity">
    <text evidence="1">Belongs to the fluoride channel Fluc/FEX (TC 1.A.43) family.</text>
</comment>
<sequence>MFNTLLAVFIGGGVGSMARWLVSLKLNSASAHLPVGTLIVNLVGAFIIGLTLALFSRMTHIDPVWKLLITTGFCGGLTTFSTFSVEVVYLIQEGKLTWAAGTILLNVAGSLAMTMLAFILVNNFASQ</sequence>
<proteinExistence type="inferred from homology"/>
<gene>
    <name evidence="1" type="primary">fluC1</name>
    <name evidence="1" type="synonym">crcB1</name>
    <name type="ordered locus">YPTB1089</name>
</gene>
<evidence type="ECO:0000255" key="1">
    <source>
        <dbReference type="HAMAP-Rule" id="MF_00454"/>
    </source>
</evidence>
<name>FLUC1_YERPS</name>
<feature type="chain" id="PRO_0000110218" description="Fluoride-specific ion channel FluC 1">
    <location>
        <begin position="1"/>
        <end position="127"/>
    </location>
</feature>
<feature type="transmembrane region" description="Helical" evidence="1">
    <location>
        <begin position="4"/>
        <end position="24"/>
    </location>
</feature>
<feature type="transmembrane region" description="Helical" evidence="1">
    <location>
        <begin position="35"/>
        <end position="55"/>
    </location>
</feature>
<feature type="transmembrane region" description="Helical" evidence="1">
    <location>
        <begin position="71"/>
        <end position="91"/>
    </location>
</feature>
<feature type="transmembrane region" description="Helical" evidence="1">
    <location>
        <begin position="101"/>
        <end position="121"/>
    </location>
</feature>
<feature type="binding site" evidence="1">
    <location>
        <position position="75"/>
    </location>
    <ligand>
        <name>Na(+)</name>
        <dbReference type="ChEBI" id="CHEBI:29101"/>
        <note>structural</note>
    </ligand>
</feature>
<feature type="binding site" evidence="1">
    <location>
        <position position="78"/>
    </location>
    <ligand>
        <name>Na(+)</name>
        <dbReference type="ChEBI" id="CHEBI:29101"/>
        <note>structural</note>
    </ligand>
</feature>
<accession>Q66DF7</accession>
<dbReference type="EMBL" id="BX936398">
    <property type="protein sequence ID" value="CAH20329.1"/>
    <property type="molecule type" value="Genomic_DNA"/>
</dbReference>
<dbReference type="RefSeq" id="WP_011191930.1">
    <property type="nucleotide sequence ID" value="NC_006155.1"/>
</dbReference>
<dbReference type="SMR" id="Q66DF7"/>
<dbReference type="KEGG" id="ypo:BZ17_1454"/>
<dbReference type="KEGG" id="yps:YPTB1089"/>
<dbReference type="PATRIC" id="fig|273123.14.peg.1538"/>
<dbReference type="Proteomes" id="UP000001011">
    <property type="component" value="Chromosome"/>
</dbReference>
<dbReference type="GO" id="GO:0005886">
    <property type="term" value="C:plasma membrane"/>
    <property type="evidence" value="ECO:0007669"/>
    <property type="project" value="UniProtKB-SubCell"/>
</dbReference>
<dbReference type="GO" id="GO:0062054">
    <property type="term" value="F:fluoride channel activity"/>
    <property type="evidence" value="ECO:0007669"/>
    <property type="project" value="UniProtKB-UniRule"/>
</dbReference>
<dbReference type="GO" id="GO:0046872">
    <property type="term" value="F:metal ion binding"/>
    <property type="evidence" value="ECO:0007669"/>
    <property type="project" value="UniProtKB-KW"/>
</dbReference>
<dbReference type="GO" id="GO:0140114">
    <property type="term" value="P:cellular detoxification of fluoride"/>
    <property type="evidence" value="ECO:0007669"/>
    <property type="project" value="UniProtKB-UniRule"/>
</dbReference>
<dbReference type="HAMAP" id="MF_00454">
    <property type="entry name" value="FluC"/>
    <property type="match status" value="1"/>
</dbReference>
<dbReference type="InterPro" id="IPR003691">
    <property type="entry name" value="FluC"/>
</dbReference>
<dbReference type="NCBIfam" id="TIGR00494">
    <property type="entry name" value="crcB"/>
    <property type="match status" value="1"/>
</dbReference>
<dbReference type="NCBIfam" id="NF010792">
    <property type="entry name" value="PRK14196.1"/>
    <property type="match status" value="1"/>
</dbReference>
<dbReference type="PANTHER" id="PTHR28259">
    <property type="entry name" value="FLUORIDE EXPORT PROTEIN 1-RELATED"/>
    <property type="match status" value="1"/>
</dbReference>
<dbReference type="PANTHER" id="PTHR28259:SF1">
    <property type="entry name" value="FLUORIDE EXPORT PROTEIN 1-RELATED"/>
    <property type="match status" value="1"/>
</dbReference>
<dbReference type="Pfam" id="PF02537">
    <property type="entry name" value="CRCB"/>
    <property type="match status" value="1"/>
</dbReference>